<organism>
    <name type="scientific">Staphylococcus aureus (strain USA300)</name>
    <dbReference type="NCBI Taxonomy" id="367830"/>
    <lineage>
        <taxon>Bacteria</taxon>
        <taxon>Bacillati</taxon>
        <taxon>Bacillota</taxon>
        <taxon>Bacilli</taxon>
        <taxon>Bacillales</taxon>
        <taxon>Staphylococcaceae</taxon>
        <taxon>Staphylococcus</taxon>
    </lineage>
</organism>
<gene>
    <name evidence="1" type="primary">dinG</name>
    <name type="ordered locus">SAUSA300_1346</name>
</gene>
<comment type="function">
    <text evidence="1">3'-5' exonuclease.</text>
</comment>
<comment type="similarity">
    <text evidence="1">Belongs to the helicase family. DinG subfamily. Type 2 sub-subfamily.</text>
</comment>
<dbReference type="EC" id="3.1.-.-" evidence="1"/>
<dbReference type="EMBL" id="CP000255">
    <property type="protein sequence ID" value="ABD21514.1"/>
    <property type="molecule type" value="Genomic_DNA"/>
</dbReference>
<dbReference type="RefSeq" id="WP_000525078.1">
    <property type="nucleotide sequence ID" value="NZ_CP027476.1"/>
</dbReference>
<dbReference type="SMR" id="Q2FGY5"/>
<dbReference type="KEGG" id="saa:SAUSA300_1346"/>
<dbReference type="HOGENOM" id="CLU_012117_1_1_9"/>
<dbReference type="OMA" id="VVTNHAM"/>
<dbReference type="Proteomes" id="UP000001939">
    <property type="component" value="Chromosome"/>
</dbReference>
<dbReference type="GO" id="GO:0005829">
    <property type="term" value="C:cytosol"/>
    <property type="evidence" value="ECO:0007669"/>
    <property type="project" value="TreeGrafter"/>
</dbReference>
<dbReference type="GO" id="GO:0008408">
    <property type="term" value="F:3'-5' exonuclease activity"/>
    <property type="evidence" value="ECO:0007669"/>
    <property type="project" value="UniProtKB-UniRule"/>
</dbReference>
<dbReference type="GO" id="GO:0005524">
    <property type="term" value="F:ATP binding"/>
    <property type="evidence" value="ECO:0007669"/>
    <property type="project" value="UniProtKB-UniRule"/>
</dbReference>
<dbReference type="GO" id="GO:0003677">
    <property type="term" value="F:DNA binding"/>
    <property type="evidence" value="ECO:0007669"/>
    <property type="project" value="InterPro"/>
</dbReference>
<dbReference type="GO" id="GO:0003887">
    <property type="term" value="F:DNA-directed DNA polymerase activity"/>
    <property type="evidence" value="ECO:0007669"/>
    <property type="project" value="InterPro"/>
</dbReference>
<dbReference type="GO" id="GO:0004386">
    <property type="term" value="F:helicase activity"/>
    <property type="evidence" value="ECO:0007669"/>
    <property type="project" value="InterPro"/>
</dbReference>
<dbReference type="GO" id="GO:0016818">
    <property type="term" value="F:hydrolase activity, acting on acid anhydrides, in phosphorus-containing anhydrides"/>
    <property type="evidence" value="ECO:0007669"/>
    <property type="project" value="InterPro"/>
</dbReference>
<dbReference type="GO" id="GO:0045004">
    <property type="term" value="P:DNA replication proofreading"/>
    <property type="evidence" value="ECO:0007669"/>
    <property type="project" value="TreeGrafter"/>
</dbReference>
<dbReference type="CDD" id="cd06127">
    <property type="entry name" value="DEDDh"/>
    <property type="match status" value="1"/>
</dbReference>
<dbReference type="FunFam" id="3.30.420.10:FF:000045">
    <property type="entry name" value="3'-5' exonuclease DinG"/>
    <property type="match status" value="1"/>
</dbReference>
<dbReference type="FunFam" id="3.40.50.300:FF:001816">
    <property type="entry name" value="3'-5' exonuclease DinG"/>
    <property type="match status" value="1"/>
</dbReference>
<dbReference type="FunFam" id="3.40.50.300:FF:000437">
    <property type="entry name" value="ATP-dependent DNA helicase DinG"/>
    <property type="match status" value="1"/>
</dbReference>
<dbReference type="Gene3D" id="3.40.50.300">
    <property type="entry name" value="P-loop containing nucleotide triphosphate hydrolases"/>
    <property type="match status" value="2"/>
</dbReference>
<dbReference type="Gene3D" id="3.30.420.10">
    <property type="entry name" value="Ribonuclease H-like superfamily/Ribonuclease H"/>
    <property type="match status" value="1"/>
</dbReference>
<dbReference type="HAMAP" id="MF_02206">
    <property type="entry name" value="DinG_exonucl"/>
    <property type="match status" value="1"/>
</dbReference>
<dbReference type="InterPro" id="IPR006555">
    <property type="entry name" value="ATP-dep_Helicase_C"/>
</dbReference>
<dbReference type="InterPro" id="IPR006310">
    <property type="entry name" value="DinG"/>
</dbReference>
<dbReference type="InterPro" id="IPR006054">
    <property type="entry name" value="DnaQ"/>
</dbReference>
<dbReference type="InterPro" id="IPR013520">
    <property type="entry name" value="Exonuclease_RNaseT/DNA_pol3"/>
</dbReference>
<dbReference type="InterPro" id="IPR014013">
    <property type="entry name" value="Helic_SF1/SF2_ATP-bd_DinG/Rad3"/>
</dbReference>
<dbReference type="InterPro" id="IPR027417">
    <property type="entry name" value="P-loop_NTPase"/>
</dbReference>
<dbReference type="InterPro" id="IPR012337">
    <property type="entry name" value="RNaseH-like_sf"/>
</dbReference>
<dbReference type="InterPro" id="IPR036397">
    <property type="entry name" value="RNaseH_sf"/>
</dbReference>
<dbReference type="NCBIfam" id="TIGR01407">
    <property type="entry name" value="dinG_rel"/>
    <property type="match status" value="1"/>
</dbReference>
<dbReference type="NCBIfam" id="TIGR00573">
    <property type="entry name" value="dnaq"/>
    <property type="match status" value="1"/>
</dbReference>
<dbReference type="PANTHER" id="PTHR30231">
    <property type="entry name" value="DNA POLYMERASE III SUBUNIT EPSILON"/>
    <property type="match status" value="1"/>
</dbReference>
<dbReference type="PANTHER" id="PTHR30231:SF41">
    <property type="entry name" value="DNA POLYMERASE III SUBUNIT EPSILON"/>
    <property type="match status" value="1"/>
</dbReference>
<dbReference type="Pfam" id="PF13307">
    <property type="entry name" value="Helicase_C_2"/>
    <property type="match status" value="1"/>
</dbReference>
<dbReference type="Pfam" id="PF00929">
    <property type="entry name" value="RNase_T"/>
    <property type="match status" value="1"/>
</dbReference>
<dbReference type="SMART" id="SM00479">
    <property type="entry name" value="EXOIII"/>
    <property type="match status" value="1"/>
</dbReference>
<dbReference type="SMART" id="SM00491">
    <property type="entry name" value="HELICc2"/>
    <property type="match status" value="1"/>
</dbReference>
<dbReference type="SUPFAM" id="SSF52540">
    <property type="entry name" value="P-loop containing nucleoside triphosphate hydrolases"/>
    <property type="match status" value="1"/>
</dbReference>
<dbReference type="SUPFAM" id="SSF53098">
    <property type="entry name" value="Ribonuclease H-like"/>
    <property type="match status" value="1"/>
</dbReference>
<dbReference type="PROSITE" id="PS51193">
    <property type="entry name" value="HELICASE_ATP_BIND_2"/>
    <property type="match status" value="1"/>
</dbReference>
<dbReference type="PROSITE" id="PS51194">
    <property type="entry name" value="HELICASE_CTER"/>
    <property type="match status" value="1"/>
</dbReference>
<reference key="1">
    <citation type="journal article" date="2006" name="Lancet">
        <title>Complete genome sequence of USA300, an epidemic clone of community-acquired meticillin-resistant Staphylococcus aureus.</title>
        <authorList>
            <person name="Diep B.A."/>
            <person name="Gill S.R."/>
            <person name="Chang R.F."/>
            <person name="Phan T.H."/>
            <person name="Chen J.H."/>
            <person name="Davidson M.G."/>
            <person name="Lin F."/>
            <person name="Lin J."/>
            <person name="Carleton H.A."/>
            <person name="Mongodin E.F."/>
            <person name="Sensabaugh G.F."/>
            <person name="Perdreau-Remington F."/>
        </authorList>
    </citation>
    <scope>NUCLEOTIDE SEQUENCE [LARGE SCALE GENOMIC DNA]</scope>
    <source>
        <strain>USA300</strain>
    </source>
</reference>
<protein>
    <recommendedName>
        <fullName evidence="1">3'-5' exonuclease DinG</fullName>
        <ecNumber evidence="1">3.1.-.-</ecNumber>
    </recommendedName>
</protein>
<evidence type="ECO:0000255" key="1">
    <source>
        <dbReference type="HAMAP-Rule" id="MF_02206"/>
    </source>
</evidence>
<keyword id="KW-0067">ATP-binding</keyword>
<keyword id="KW-0269">Exonuclease</keyword>
<keyword id="KW-0378">Hydrolase</keyword>
<keyword id="KW-0540">Nuclease</keyword>
<keyword id="KW-0547">Nucleotide-binding</keyword>
<proteinExistence type="inferred from homology"/>
<sequence length="897" mass="104218">MGMATYAVVDLETTGNQLDFDDIIQIGITFVRNNQIIDTYHSMIRTNLEIPPFIQALTSIEENMLQQAPYFNQVAQEIYDKIKDCIFVAHNVDFDLNFIKKAFKDCNIQYRPKKVIDTLEIFKIAFPTDKSYQLSELAEAHGITLANAHRADEDAATTAKLMILAFEKFEKLPLDTLKQLYYLSKQLKYDLYDIFFEMVRQYDAKPLDKSYEKFEQIIYRKQVDFKKPTTNYNGSLKSLYSKAVDQLGLTYRPQQLYLAETILDQLMHSEKAMIEASLGSGKSLAYLLAALMYNIETGKHVMISTNTKLLQSQLLEKDIPAMNEALNFKINALLIKSKSDYISLGLISQILKDDTSNYEVNILKMQLLIWITETPSGDIQELNLKGGQKMYFDQKIETYVPARHDVHYYNFIKRNAQNIQIGITNHAHLIHSDVENSIYQLFDDCIVDEAHRLPDYALNQVTNELSYADIKYQLGLIGKNENEKLLKAIDQLEKQRILEKLDIAPIDIFGLKASMNEIHELNEQLFSTIFTIINDSDVYDDDIHRFHNVFTFETKDILKDLHAIIDKLNKTLEIFNGISHKTVKSLRKQLLYLKDKFKNIEQSLKAGHTSFISIKNLSQKSTIRLYVKDYAVKDVLTKQVLEKFKSLIFISGTLKFNHSFEAFKQLFNKDVHFNTFEVNTSLQSAKNTSVFIPSDVASYQYKNIDEYVASIVSYIIEYTTITSSKCLVLFTSYKMMHMVQDMLNELPEFEDYVVLTQQQNQNYKIVQQFNNFDKAILLGTSTFFEGFDFQANGIKCVMIAKLPFMNKHNAKYWLMDSEFTSTFKEYVLPDAVTRFRQGLGRLIRNENDRGIIVSFDDRLINSNYKNFFEQTLENYRQKKGDIQQFGKLLRQIQKKKK</sequence>
<accession>Q2FGY5</accession>
<name>DING_STAA3</name>
<feature type="chain" id="PRO_0000277599" description="3'-5' exonuclease DinG">
    <location>
        <begin position="1"/>
        <end position="897"/>
    </location>
</feature>
<feature type="domain" description="Exonuclease" evidence="1">
    <location>
        <begin position="8"/>
        <end position="161"/>
    </location>
</feature>
<feature type="domain" description="Helicase ATP-binding" evidence="1">
    <location>
        <begin position="241"/>
        <end position="496"/>
    </location>
</feature>
<feature type="domain" description="Helicase C-terminal" evidence="1">
    <location>
        <begin position="703"/>
        <end position="893"/>
    </location>
</feature>
<feature type="short sequence motif" description="DEAH box" evidence="1">
    <location>
        <begin position="448"/>
        <end position="451"/>
    </location>
</feature>
<feature type="binding site" evidence="1">
    <location>
        <begin position="276"/>
        <end position="283"/>
    </location>
    <ligand>
        <name>ATP</name>
        <dbReference type="ChEBI" id="CHEBI:30616"/>
    </ligand>
</feature>